<organism>
    <name type="scientific">Clostridium botulinum (strain Okra / Type B1)</name>
    <dbReference type="NCBI Taxonomy" id="498213"/>
    <lineage>
        <taxon>Bacteria</taxon>
        <taxon>Bacillati</taxon>
        <taxon>Bacillota</taxon>
        <taxon>Clostridia</taxon>
        <taxon>Eubacteriales</taxon>
        <taxon>Clostridiaceae</taxon>
        <taxon>Clostridium</taxon>
    </lineage>
</organism>
<keyword id="KW-0067">ATP-binding</keyword>
<keyword id="KW-0460">Magnesium</keyword>
<keyword id="KW-0547">Nucleotide-binding</keyword>
<keyword id="KW-0808">Transferase</keyword>
<keyword id="KW-0819">tRNA processing</keyword>
<reference key="1">
    <citation type="journal article" date="2007" name="PLoS ONE">
        <title>Analysis of the neurotoxin complex genes in Clostridium botulinum A1-A4 and B1 strains: BoNT/A3, /Ba4 and /B1 clusters are located within plasmids.</title>
        <authorList>
            <person name="Smith T.J."/>
            <person name="Hill K.K."/>
            <person name="Foley B.T."/>
            <person name="Detter J.C."/>
            <person name="Munk A.C."/>
            <person name="Bruce D.C."/>
            <person name="Doggett N.A."/>
            <person name="Smith L.A."/>
            <person name="Marks J.D."/>
            <person name="Xie G."/>
            <person name="Brettin T.S."/>
        </authorList>
    </citation>
    <scope>NUCLEOTIDE SEQUENCE [LARGE SCALE GENOMIC DNA]</scope>
    <source>
        <strain>Okra / Type B1</strain>
    </source>
</reference>
<sequence length="311" mass="36245">MIDLLIIAGPTAVGKTDISIKLAEKLNGEIISADSMQIYKYMDIGSAKITKDEMKGIPHHLIDVVEPHEEFNVSSFKDLAEKSIKDIWNRGKLPIIAGGTGLYINSLIYNYDFTDADRDEKYREYLTKLAEDKGNEYVHSLLKDIDEESYEKLYPNDLKRVVRALEVYKITGKSISEYIKENEKKLYDIPYNVNYFILNMNREVLYERINKRVDIMMGKGLIEEVKKLESMGYTPDMQSMKGIGYKEVLFYLNGDISLDEAIYLIKKGSRNYAKRQLTWFRKDKRSIWIDKDKYSSEEEIVDKIIKMVKDK</sequence>
<dbReference type="EC" id="2.5.1.75" evidence="1"/>
<dbReference type="EMBL" id="CP000939">
    <property type="protein sequence ID" value="ACA45626.1"/>
    <property type="molecule type" value="Genomic_DNA"/>
</dbReference>
<dbReference type="RefSeq" id="WP_003403086.1">
    <property type="nucleotide sequence ID" value="NC_010516.1"/>
</dbReference>
<dbReference type="SMR" id="B1IM66"/>
<dbReference type="KEGG" id="cbb:CLD_2842"/>
<dbReference type="HOGENOM" id="CLU_032616_0_1_9"/>
<dbReference type="Proteomes" id="UP000008541">
    <property type="component" value="Chromosome"/>
</dbReference>
<dbReference type="GO" id="GO:0005524">
    <property type="term" value="F:ATP binding"/>
    <property type="evidence" value="ECO:0007669"/>
    <property type="project" value="UniProtKB-UniRule"/>
</dbReference>
<dbReference type="GO" id="GO:0052381">
    <property type="term" value="F:tRNA dimethylallyltransferase activity"/>
    <property type="evidence" value="ECO:0007669"/>
    <property type="project" value="UniProtKB-UniRule"/>
</dbReference>
<dbReference type="GO" id="GO:0006400">
    <property type="term" value="P:tRNA modification"/>
    <property type="evidence" value="ECO:0007669"/>
    <property type="project" value="TreeGrafter"/>
</dbReference>
<dbReference type="FunFam" id="1.10.20.140:FF:000001">
    <property type="entry name" value="tRNA dimethylallyltransferase"/>
    <property type="match status" value="1"/>
</dbReference>
<dbReference type="Gene3D" id="1.10.20.140">
    <property type="match status" value="1"/>
</dbReference>
<dbReference type="Gene3D" id="3.40.50.300">
    <property type="entry name" value="P-loop containing nucleotide triphosphate hydrolases"/>
    <property type="match status" value="1"/>
</dbReference>
<dbReference type="HAMAP" id="MF_00185">
    <property type="entry name" value="IPP_trans"/>
    <property type="match status" value="1"/>
</dbReference>
<dbReference type="InterPro" id="IPR039657">
    <property type="entry name" value="Dimethylallyltransferase"/>
</dbReference>
<dbReference type="InterPro" id="IPR018022">
    <property type="entry name" value="IPT"/>
</dbReference>
<dbReference type="InterPro" id="IPR027417">
    <property type="entry name" value="P-loop_NTPase"/>
</dbReference>
<dbReference type="NCBIfam" id="TIGR00174">
    <property type="entry name" value="miaA"/>
    <property type="match status" value="1"/>
</dbReference>
<dbReference type="PANTHER" id="PTHR11088">
    <property type="entry name" value="TRNA DIMETHYLALLYLTRANSFERASE"/>
    <property type="match status" value="1"/>
</dbReference>
<dbReference type="PANTHER" id="PTHR11088:SF60">
    <property type="entry name" value="TRNA DIMETHYLALLYLTRANSFERASE"/>
    <property type="match status" value="1"/>
</dbReference>
<dbReference type="Pfam" id="PF01715">
    <property type="entry name" value="IPPT"/>
    <property type="match status" value="1"/>
</dbReference>
<dbReference type="SUPFAM" id="SSF52540">
    <property type="entry name" value="P-loop containing nucleoside triphosphate hydrolases"/>
    <property type="match status" value="2"/>
</dbReference>
<feature type="chain" id="PRO_1000098657" description="tRNA dimethylallyltransferase">
    <location>
        <begin position="1"/>
        <end position="311"/>
    </location>
</feature>
<feature type="region of interest" description="Interaction with substrate tRNA" evidence="1">
    <location>
        <begin position="34"/>
        <end position="37"/>
    </location>
</feature>
<feature type="binding site" evidence="1">
    <location>
        <begin position="9"/>
        <end position="16"/>
    </location>
    <ligand>
        <name>ATP</name>
        <dbReference type="ChEBI" id="CHEBI:30616"/>
    </ligand>
</feature>
<feature type="binding site" evidence="1">
    <location>
        <begin position="11"/>
        <end position="16"/>
    </location>
    <ligand>
        <name>substrate</name>
    </ligand>
</feature>
<feature type="site" description="Interaction with substrate tRNA" evidence="1">
    <location>
        <position position="100"/>
    </location>
</feature>
<feature type="site" description="Interaction with substrate tRNA" evidence="1">
    <location>
        <position position="123"/>
    </location>
</feature>
<accession>B1IM66</accession>
<comment type="function">
    <text evidence="1">Catalyzes the transfer of a dimethylallyl group onto the adenine at position 37 in tRNAs that read codons beginning with uridine, leading to the formation of N6-(dimethylallyl)adenosine (i(6)A).</text>
</comment>
<comment type="catalytic activity">
    <reaction evidence="1">
        <text>adenosine(37) in tRNA + dimethylallyl diphosphate = N(6)-dimethylallyladenosine(37) in tRNA + diphosphate</text>
        <dbReference type="Rhea" id="RHEA:26482"/>
        <dbReference type="Rhea" id="RHEA-COMP:10162"/>
        <dbReference type="Rhea" id="RHEA-COMP:10375"/>
        <dbReference type="ChEBI" id="CHEBI:33019"/>
        <dbReference type="ChEBI" id="CHEBI:57623"/>
        <dbReference type="ChEBI" id="CHEBI:74411"/>
        <dbReference type="ChEBI" id="CHEBI:74415"/>
        <dbReference type="EC" id="2.5.1.75"/>
    </reaction>
</comment>
<comment type="cofactor">
    <cofactor evidence="1">
        <name>Mg(2+)</name>
        <dbReference type="ChEBI" id="CHEBI:18420"/>
    </cofactor>
</comment>
<comment type="subunit">
    <text evidence="1">Monomer.</text>
</comment>
<comment type="similarity">
    <text evidence="1">Belongs to the IPP transferase family.</text>
</comment>
<name>MIAA_CLOBK</name>
<protein>
    <recommendedName>
        <fullName evidence="1">tRNA dimethylallyltransferase</fullName>
        <ecNumber evidence="1">2.5.1.75</ecNumber>
    </recommendedName>
    <alternativeName>
        <fullName evidence="1">Dimethylallyl diphosphate:tRNA dimethylallyltransferase</fullName>
        <shortName evidence="1">DMAPP:tRNA dimethylallyltransferase</shortName>
        <shortName evidence="1">DMATase</shortName>
    </alternativeName>
    <alternativeName>
        <fullName evidence="1">Isopentenyl-diphosphate:tRNA isopentenyltransferase</fullName>
        <shortName evidence="1">IPP transferase</shortName>
        <shortName evidence="1">IPPT</shortName>
        <shortName evidence="1">IPTase</shortName>
    </alternativeName>
</protein>
<gene>
    <name evidence="1" type="primary">miaA</name>
    <name type="ordered locus">CLD_2842</name>
</gene>
<evidence type="ECO:0000255" key="1">
    <source>
        <dbReference type="HAMAP-Rule" id="MF_00185"/>
    </source>
</evidence>
<proteinExistence type="inferred from homology"/>